<sequence length="86" mass="10200">MAEKRKYSRKYCKYTEAKVDFIDYKDTALLKHALSERFKIMPRRLTGTSKKHQEMVEIAIKRARHVALIPYIVDRKEVVTNPFEGL</sequence>
<dbReference type="EMBL" id="CP000932">
    <property type="protein sequence ID" value="ACM64277.1"/>
    <property type="molecule type" value="Genomic_DNA"/>
</dbReference>
<dbReference type="RefSeq" id="WP_012661660.1">
    <property type="nucleotide sequence ID" value="NC_012039.1"/>
</dbReference>
<dbReference type="SMR" id="B9KCI8"/>
<dbReference type="STRING" id="306263.Cla_0953"/>
<dbReference type="KEGG" id="cla:CLA_0953"/>
<dbReference type="PATRIC" id="fig|306263.5.peg.937"/>
<dbReference type="eggNOG" id="COG0238">
    <property type="taxonomic scope" value="Bacteria"/>
</dbReference>
<dbReference type="HOGENOM" id="CLU_148710_2_2_7"/>
<dbReference type="Proteomes" id="UP000007727">
    <property type="component" value="Chromosome"/>
</dbReference>
<dbReference type="GO" id="GO:0022627">
    <property type="term" value="C:cytosolic small ribosomal subunit"/>
    <property type="evidence" value="ECO:0007669"/>
    <property type="project" value="TreeGrafter"/>
</dbReference>
<dbReference type="GO" id="GO:0070181">
    <property type="term" value="F:small ribosomal subunit rRNA binding"/>
    <property type="evidence" value="ECO:0007669"/>
    <property type="project" value="TreeGrafter"/>
</dbReference>
<dbReference type="GO" id="GO:0003735">
    <property type="term" value="F:structural constituent of ribosome"/>
    <property type="evidence" value="ECO:0007669"/>
    <property type="project" value="InterPro"/>
</dbReference>
<dbReference type="GO" id="GO:0006412">
    <property type="term" value="P:translation"/>
    <property type="evidence" value="ECO:0007669"/>
    <property type="project" value="UniProtKB-UniRule"/>
</dbReference>
<dbReference type="FunFam" id="4.10.640.10:FF:000005">
    <property type="entry name" value="30S ribosomal protein S18"/>
    <property type="match status" value="1"/>
</dbReference>
<dbReference type="Gene3D" id="4.10.640.10">
    <property type="entry name" value="Ribosomal protein S18"/>
    <property type="match status" value="1"/>
</dbReference>
<dbReference type="HAMAP" id="MF_00270">
    <property type="entry name" value="Ribosomal_bS18"/>
    <property type="match status" value="1"/>
</dbReference>
<dbReference type="InterPro" id="IPR001648">
    <property type="entry name" value="Ribosomal_bS18"/>
</dbReference>
<dbReference type="InterPro" id="IPR036870">
    <property type="entry name" value="Ribosomal_bS18_sf"/>
</dbReference>
<dbReference type="NCBIfam" id="TIGR00165">
    <property type="entry name" value="S18"/>
    <property type="match status" value="1"/>
</dbReference>
<dbReference type="PANTHER" id="PTHR13479">
    <property type="entry name" value="30S RIBOSOMAL PROTEIN S18"/>
    <property type="match status" value="1"/>
</dbReference>
<dbReference type="PANTHER" id="PTHR13479:SF40">
    <property type="entry name" value="SMALL RIBOSOMAL SUBUNIT PROTEIN BS18M"/>
    <property type="match status" value="1"/>
</dbReference>
<dbReference type="Pfam" id="PF01084">
    <property type="entry name" value="Ribosomal_S18"/>
    <property type="match status" value="1"/>
</dbReference>
<dbReference type="PRINTS" id="PR00974">
    <property type="entry name" value="RIBOSOMALS18"/>
</dbReference>
<dbReference type="SUPFAM" id="SSF46911">
    <property type="entry name" value="Ribosomal protein S18"/>
    <property type="match status" value="1"/>
</dbReference>
<protein>
    <recommendedName>
        <fullName evidence="1">Small ribosomal subunit protein bS18</fullName>
    </recommendedName>
    <alternativeName>
        <fullName evidence="2">30S ribosomal protein S18</fullName>
    </alternativeName>
</protein>
<name>RS18_CAMLR</name>
<feature type="chain" id="PRO_1000125790" description="Small ribosomal subunit protein bS18">
    <location>
        <begin position="1"/>
        <end position="86"/>
    </location>
</feature>
<accession>B9KCI8</accession>
<reference key="1">
    <citation type="journal article" date="2008" name="Foodborne Pathog. Dis.">
        <title>The complete genome sequence and analysis of the human pathogen Campylobacter lari.</title>
        <authorList>
            <person name="Miller W.G."/>
            <person name="Wang G."/>
            <person name="Binnewies T.T."/>
            <person name="Parker C.T."/>
        </authorList>
    </citation>
    <scope>NUCLEOTIDE SEQUENCE [LARGE SCALE GENOMIC DNA]</scope>
    <source>
        <strain>RM2100 / D67 / ATCC BAA-1060</strain>
    </source>
</reference>
<comment type="function">
    <text evidence="1">Binds as a heterodimer with protein bS6 to the central domain of the 16S rRNA, where it helps stabilize the platform of the 30S subunit.</text>
</comment>
<comment type="subunit">
    <text evidence="1">Part of the 30S ribosomal subunit. Forms a tight heterodimer with protein bS6.</text>
</comment>
<comment type="similarity">
    <text evidence="1">Belongs to the bacterial ribosomal protein bS18 family.</text>
</comment>
<keyword id="KW-1185">Reference proteome</keyword>
<keyword id="KW-0687">Ribonucleoprotein</keyword>
<keyword id="KW-0689">Ribosomal protein</keyword>
<keyword id="KW-0694">RNA-binding</keyword>
<keyword id="KW-0699">rRNA-binding</keyword>
<gene>
    <name evidence="1" type="primary">rpsR</name>
    <name type="ordered locus">Cla_0953</name>
</gene>
<proteinExistence type="inferred from homology"/>
<organism>
    <name type="scientific">Campylobacter lari (strain RM2100 / D67 / ATCC BAA-1060)</name>
    <dbReference type="NCBI Taxonomy" id="306263"/>
    <lineage>
        <taxon>Bacteria</taxon>
        <taxon>Pseudomonadati</taxon>
        <taxon>Campylobacterota</taxon>
        <taxon>Epsilonproteobacteria</taxon>
        <taxon>Campylobacterales</taxon>
        <taxon>Campylobacteraceae</taxon>
        <taxon>Campylobacter</taxon>
    </lineage>
</organism>
<evidence type="ECO:0000255" key="1">
    <source>
        <dbReference type="HAMAP-Rule" id="MF_00270"/>
    </source>
</evidence>
<evidence type="ECO:0000305" key="2"/>